<proteinExistence type="evidence at transcript level"/>
<evidence type="ECO:0000250" key="1"/>
<evidence type="ECO:0000255" key="2">
    <source>
        <dbReference type="PROSITE-ProRule" id="PRU00028"/>
    </source>
</evidence>
<evidence type="ECO:0000256" key="3">
    <source>
        <dbReference type="SAM" id="MobiDB-lite"/>
    </source>
</evidence>
<evidence type="ECO:0000269" key="4">
    <source>
    </source>
</evidence>
<evidence type="ECO:0000303" key="5">
    <source>
    </source>
</evidence>
<evidence type="ECO:0000305" key="6"/>
<evidence type="ECO:0000305" key="7">
    <source>
    </source>
</evidence>
<evidence type="ECO:0000312" key="8">
    <source>
        <dbReference type="HGNC" id="HGNC:20458"/>
    </source>
</evidence>
<name>CRGN_HUMAN</name>
<keyword id="KW-0025">Alternative splicing</keyword>
<keyword id="KW-1185">Reference proteome</keyword>
<keyword id="KW-0677">Repeat</keyword>
<sequence length="182" mass="20624">MAQRSGKITLYEGKHFTGQKLEVFGDCDNFQDRGFMNRVNSIHVESGAWVCFNHPDFRGQQFILEHGDYPDFFRWNSHSDHMGSCRPVGMHGEHFRLEIFEGCNFTGQCLEFLEDSPFLQSRGWVKNCVNTIKVYGDGAAWSPRSFGAEDFQLSSSLQSDQGPEEATTKPATTQPPFLTANL</sequence>
<dbReference type="EMBL" id="AF445455">
    <property type="protein sequence ID" value="AAL40968.1"/>
    <property type="molecule type" value="mRNA"/>
</dbReference>
<dbReference type="EMBL" id="CH471173">
    <property type="protein sequence ID" value="EAW53992.1"/>
    <property type="molecule type" value="Genomic_DNA"/>
</dbReference>
<dbReference type="EMBL" id="BC100878">
    <property type="protein sequence ID" value="AAI00879.1"/>
    <property type="molecule type" value="mRNA"/>
</dbReference>
<dbReference type="EMBL" id="BC100879">
    <property type="protein sequence ID" value="AAI00880.1"/>
    <property type="molecule type" value="mRNA"/>
</dbReference>
<dbReference type="EMBL" id="BC100880">
    <property type="protein sequence ID" value="AAI00881.1"/>
    <property type="molecule type" value="mRNA"/>
</dbReference>
<dbReference type="EMBL" id="BC100881">
    <property type="protein sequence ID" value="AAI00882.1"/>
    <property type="molecule type" value="mRNA"/>
</dbReference>
<dbReference type="CCDS" id="CCDS5926.1">
    <molecule id="Q8WXF5-1"/>
</dbReference>
<dbReference type="CCDS" id="CCDS78289.1">
    <molecule id="Q8WXF5-2"/>
</dbReference>
<dbReference type="RefSeq" id="NP_001295221.1">
    <molecule id="Q8WXF5-2"/>
    <property type="nucleotide sequence ID" value="NM_001308292.1"/>
</dbReference>
<dbReference type="RefSeq" id="NP_653328.1">
    <molecule id="Q8WXF5-1"/>
    <property type="nucleotide sequence ID" value="NM_144727.3"/>
</dbReference>
<dbReference type="RefSeq" id="XP_016867262.1">
    <molecule id="Q8WXF5-2"/>
    <property type="nucleotide sequence ID" value="XM_017011773.2"/>
</dbReference>
<dbReference type="RefSeq" id="XP_054213328.1">
    <molecule id="Q8WXF5-2"/>
    <property type="nucleotide sequence ID" value="XM_054357353.1"/>
</dbReference>
<dbReference type="SMR" id="Q8WXF5"/>
<dbReference type="BioGRID" id="127571">
    <property type="interactions" value="12"/>
</dbReference>
<dbReference type="FunCoup" id="Q8WXF5">
    <property type="interactions" value="16"/>
</dbReference>
<dbReference type="IntAct" id="Q8WXF5">
    <property type="interactions" value="10"/>
</dbReference>
<dbReference type="STRING" id="9606.ENSP00000338613"/>
<dbReference type="GlyGen" id="Q8WXF5">
    <property type="glycosylation" value="1 site, 1 O-linked glycan (1 site)"/>
</dbReference>
<dbReference type="iPTMnet" id="Q8WXF5"/>
<dbReference type="PhosphoSitePlus" id="Q8WXF5"/>
<dbReference type="BioMuta" id="CRYGN"/>
<dbReference type="DMDM" id="74727349"/>
<dbReference type="PaxDb" id="9606-ENSP00000338613"/>
<dbReference type="TopDownProteomics" id="Q8WXF5-1">
    <molecule id="Q8WXF5-1"/>
</dbReference>
<dbReference type="Antibodypedia" id="64394">
    <property type="antibodies" value="44 antibodies from 15 providers"/>
</dbReference>
<dbReference type="DNASU" id="155051"/>
<dbReference type="Ensembl" id="ENST00000337323.3">
    <molecule id="Q8WXF5-1"/>
    <property type="protein sequence ID" value="ENSP00000338613.3"/>
    <property type="gene ID" value="ENSG00000127377.10"/>
</dbReference>
<dbReference type="Ensembl" id="ENST00000491928.1">
    <molecule id="Q8WXF5-2"/>
    <property type="protein sequence ID" value="ENSP00000420157.1"/>
    <property type="gene ID" value="ENSG00000127377.10"/>
</dbReference>
<dbReference type="GeneID" id="155051"/>
<dbReference type="KEGG" id="hsa:155051"/>
<dbReference type="MANE-Select" id="ENST00000337323.3">
    <property type="protein sequence ID" value="ENSP00000338613.3"/>
    <property type="RefSeq nucleotide sequence ID" value="NM_144727.3"/>
    <property type="RefSeq protein sequence ID" value="NP_653328.1"/>
</dbReference>
<dbReference type="UCSC" id="uc003wke.4">
    <molecule id="Q8WXF5-1"/>
    <property type="organism name" value="human"/>
</dbReference>
<dbReference type="AGR" id="HGNC:20458"/>
<dbReference type="CTD" id="155051"/>
<dbReference type="GeneCards" id="CRYGN"/>
<dbReference type="HGNC" id="HGNC:20458">
    <property type="gene designation" value="CRYGN"/>
</dbReference>
<dbReference type="HPA" id="ENSG00000127377">
    <property type="expression patterns" value="Tissue enriched (thyroid)"/>
</dbReference>
<dbReference type="MIM" id="609603">
    <property type="type" value="gene"/>
</dbReference>
<dbReference type="neXtProt" id="NX_Q8WXF5"/>
<dbReference type="PharmGKB" id="PA134870586"/>
<dbReference type="VEuPathDB" id="HostDB:ENSG00000127377"/>
<dbReference type="eggNOG" id="ENOG502QV8X">
    <property type="taxonomic scope" value="Eukaryota"/>
</dbReference>
<dbReference type="GeneTree" id="ENSGT00940000159301"/>
<dbReference type="HOGENOM" id="CLU_081883_1_0_1"/>
<dbReference type="InParanoid" id="Q8WXF5"/>
<dbReference type="OrthoDB" id="5976022at2759"/>
<dbReference type="PAN-GO" id="Q8WXF5">
    <property type="GO annotations" value="3 GO annotations based on evolutionary models"/>
</dbReference>
<dbReference type="PhylomeDB" id="Q8WXF5"/>
<dbReference type="PathwayCommons" id="Q8WXF5"/>
<dbReference type="BioGRID-ORCS" id="155051">
    <property type="hits" value="10 hits in 1138 CRISPR screens"/>
</dbReference>
<dbReference type="GenomeRNAi" id="155051"/>
<dbReference type="Pharos" id="Q8WXF5">
    <property type="development level" value="Tdark"/>
</dbReference>
<dbReference type="PRO" id="PR:Q8WXF5"/>
<dbReference type="Proteomes" id="UP000005640">
    <property type="component" value="Chromosome 7"/>
</dbReference>
<dbReference type="RNAct" id="Q8WXF5">
    <property type="molecule type" value="protein"/>
</dbReference>
<dbReference type="Bgee" id="ENSG00000127377">
    <property type="expression patterns" value="Expressed in right lobe of thyroid gland and 91 other cell types or tissues"/>
</dbReference>
<dbReference type="ExpressionAtlas" id="Q8WXF5">
    <property type="expression patterns" value="baseline and differential"/>
</dbReference>
<dbReference type="GO" id="GO:0005212">
    <property type="term" value="F:structural constituent of eye lens"/>
    <property type="evidence" value="ECO:0000318"/>
    <property type="project" value="GO_Central"/>
</dbReference>
<dbReference type="GO" id="GO:0002088">
    <property type="term" value="P:lens development in camera-type eye"/>
    <property type="evidence" value="ECO:0000318"/>
    <property type="project" value="GO_Central"/>
</dbReference>
<dbReference type="GO" id="GO:0007601">
    <property type="term" value="P:visual perception"/>
    <property type="evidence" value="ECO:0000318"/>
    <property type="project" value="GO_Central"/>
</dbReference>
<dbReference type="FunFam" id="2.60.20.10:FF:000007">
    <property type="entry name" value="Crystallin gamma N"/>
    <property type="match status" value="1"/>
</dbReference>
<dbReference type="Gene3D" id="2.60.20.10">
    <property type="entry name" value="Crystallins"/>
    <property type="match status" value="2"/>
</dbReference>
<dbReference type="InterPro" id="IPR050252">
    <property type="entry name" value="Beta/Gamma-Crystallin"/>
</dbReference>
<dbReference type="InterPro" id="IPR001064">
    <property type="entry name" value="Beta/gamma_crystallin"/>
</dbReference>
<dbReference type="InterPro" id="IPR011024">
    <property type="entry name" value="G_crystallin-like"/>
</dbReference>
<dbReference type="PANTHER" id="PTHR11818">
    <property type="entry name" value="BETA/GAMMA CRYSTALLIN"/>
    <property type="match status" value="1"/>
</dbReference>
<dbReference type="PANTHER" id="PTHR11818:SF22">
    <property type="entry name" value="GAMMA-CRYSTALLIN N"/>
    <property type="match status" value="1"/>
</dbReference>
<dbReference type="Pfam" id="PF00030">
    <property type="entry name" value="Crystall"/>
    <property type="match status" value="1"/>
</dbReference>
<dbReference type="PRINTS" id="PR01367">
    <property type="entry name" value="BGCRYSTALLIN"/>
</dbReference>
<dbReference type="SMART" id="SM00247">
    <property type="entry name" value="XTALbg"/>
    <property type="match status" value="1"/>
</dbReference>
<dbReference type="SUPFAM" id="SSF49695">
    <property type="entry name" value="gamma-Crystallin-like"/>
    <property type="match status" value="1"/>
</dbReference>
<dbReference type="PROSITE" id="PS50915">
    <property type="entry name" value="CRYSTALLIN_BETA_GAMMA"/>
    <property type="match status" value="3"/>
</dbReference>
<reference key="1">
    <citation type="journal article" date="2005" name="FEBS J.">
        <title>Gamma-N-crystallin and the evolution of the betagamma-crystallin superfamily in vertebrates.</title>
        <authorList>
            <person name="Wistow G."/>
            <person name="Wyatt K."/>
            <person name="David L."/>
            <person name="Gao C."/>
            <person name="Bateman O."/>
            <person name="Bernstein S."/>
            <person name="Tomarev S."/>
            <person name="Segovia L."/>
            <person name="Slingsby C."/>
            <person name="Vihtelic T."/>
        </authorList>
    </citation>
    <scope>NUCLEOTIDE SEQUENCE [MRNA] (ISOFORM 1)</scope>
    <scope>TISSUE SPECIFICITY</scope>
    <source>
        <tissue>Testis</tissue>
    </source>
</reference>
<reference key="2">
    <citation type="submission" date="2005-09" db="EMBL/GenBank/DDBJ databases">
        <authorList>
            <person name="Mural R.J."/>
            <person name="Istrail S."/>
            <person name="Sutton G.G."/>
            <person name="Florea L."/>
            <person name="Halpern A.L."/>
            <person name="Mobarry C.M."/>
            <person name="Lippert R."/>
            <person name="Walenz B."/>
            <person name="Shatkay H."/>
            <person name="Dew I."/>
            <person name="Miller J.R."/>
            <person name="Flanigan M.J."/>
            <person name="Edwards N.J."/>
            <person name="Bolanos R."/>
            <person name="Fasulo D."/>
            <person name="Halldorsson B.V."/>
            <person name="Hannenhalli S."/>
            <person name="Turner R."/>
            <person name="Yooseph S."/>
            <person name="Lu F."/>
            <person name="Nusskern D.R."/>
            <person name="Shue B.C."/>
            <person name="Zheng X.H."/>
            <person name="Zhong F."/>
            <person name="Delcher A.L."/>
            <person name="Huson D.H."/>
            <person name="Kravitz S.A."/>
            <person name="Mouchard L."/>
            <person name="Reinert K."/>
            <person name="Remington K.A."/>
            <person name="Clark A.G."/>
            <person name="Waterman M.S."/>
            <person name="Eichler E.E."/>
            <person name="Adams M.D."/>
            <person name="Hunkapiller M.W."/>
            <person name="Myers E.W."/>
            <person name="Venter J.C."/>
        </authorList>
    </citation>
    <scope>NUCLEOTIDE SEQUENCE [LARGE SCALE GENOMIC DNA]</scope>
</reference>
<reference key="3">
    <citation type="journal article" date="2004" name="Genome Res.">
        <title>The status, quality, and expansion of the NIH full-length cDNA project: the Mammalian Gene Collection (MGC).</title>
        <authorList>
            <consortium name="The MGC Project Team"/>
        </authorList>
    </citation>
    <scope>NUCLEOTIDE SEQUENCE [LARGE SCALE MRNA] (ISOFORMS 1 AND 2)</scope>
</reference>
<organism>
    <name type="scientific">Homo sapiens</name>
    <name type="common">Human</name>
    <dbReference type="NCBI Taxonomy" id="9606"/>
    <lineage>
        <taxon>Eukaryota</taxon>
        <taxon>Metazoa</taxon>
        <taxon>Chordata</taxon>
        <taxon>Craniata</taxon>
        <taxon>Vertebrata</taxon>
        <taxon>Euteleostomi</taxon>
        <taxon>Mammalia</taxon>
        <taxon>Eutheria</taxon>
        <taxon>Euarchontoglires</taxon>
        <taxon>Primates</taxon>
        <taxon>Haplorrhini</taxon>
        <taxon>Catarrhini</taxon>
        <taxon>Hominidae</taxon>
        <taxon>Homo</taxon>
    </lineage>
</organism>
<feature type="chain" id="PRO_0000311281" description="Gamma-crystallin N">
    <location>
        <begin position="1"/>
        <end position="182"/>
    </location>
</feature>
<feature type="domain" description="Beta/gamma crystallin 'Greek key' 1" evidence="2">
    <location>
        <begin position="6"/>
        <end position="46"/>
    </location>
</feature>
<feature type="domain" description="Beta/gamma crystallin 'Greek key' 2" evidence="2">
    <location>
        <begin position="47"/>
        <end position="89"/>
    </location>
</feature>
<feature type="domain" description="Beta/gamma crystallin 'Greek key' 3" evidence="2">
    <location>
        <begin position="95"/>
        <end position="136"/>
    </location>
</feature>
<feature type="region of interest" description="Disordered" evidence="3">
    <location>
        <begin position="153"/>
        <end position="182"/>
    </location>
</feature>
<feature type="compositionally biased region" description="Polar residues" evidence="3">
    <location>
        <begin position="169"/>
        <end position="182"/>
    </location>
</feature>
<feature type="splice variant" id="VSP_029507" description="In isoform 2." evidence="5">
    <original>HGEHFRLEIFEGCNFTGQCLEFLEDSPFLQSRGWV</original>
    <variation>VSGPVHRRLSLPAGGTEGQPWQTVARNRGAWSSRL</variation>
    <location>
        <begin position="91"/>
        <end position="125"/>
    </location>
</feature>
<feature type="splice variant" id="VSP_029508" description="In isoform 2." evidence="5">
    <location>
        <begin position="126"/>
        <end position="182"/>
    </location>
</feature>
<accession>Q8WXF5</accession>
<accession>Q496G6</accession>
<comment type="subunit">
    <text evidence="1">Monomer.</text>
</comment>
<comment type="alternative products">
    <event type="alternative splicing"/>
    <isoform>
        <id>Q8WXF5-1</id>
        <name>1</name>
        <sequence type="displayed"/>
    </isoform>
    <isoform>
        <id>Q8WXF5-2</id>
        <name>2</name>
        <sequence type="described" ref="VSP_029507 VSP_029508"/>
    </isoform>
</comment>
<comment type="tissue specificity">
    <text evidence="4">Not specifically expressed in eye.</text>
</comment>
<comment type="similarity">
    <text evidence="6">Belongs to the beta/gamma-crystallin family.</text>
</comment>
<comment type="caution">
    <text evidence="7">In contrast to the orthologous protein found in other species, the C-terminal part differs and lacks the fourth beta/gamma crystallin 'Greek key' domain. Moreover, its non-specific tissue specificity suggests that it may have lost its function (PubMed:15853812).</text>
</comment>
<gene>
    <name evidence="8" type="primary">CRYGN</name>
</gene>
<protein>
    <recommendedName>
        <fullName evidence="6">Gamma-crystallin N</fullName>
    </recommendedName>
    <alternativeName>
        <fullName evidence="6">Gamma-N-crystallin</fullName>
    </alternativeName>
</protein>